<dbReference type="EMBL" id="CP000056">
    <property type="protein sequence ID" value="AAX72893.1"/>
    <property type="molecule type" value="Genomic_DNA"/>
</dbReference>
<dbReference type="RefSeq" id="WP_011285265.1">
    <property type="nucleotide sequence ID" value="NC_007296.2"/>
</dbReference>
<dbReference type="SMR" id="Q48QW7"/>
<dbReference type="KEGG" id="spb:M28_Spy1783"/>
<dbReference type="HOGENOM" id="CLU_040469_3_2_9"/>
<dbReference type="GO" id="GO:0005829">
    <property type="term" value="C:cytosol"/>
    <property type="evidence" value="ECO:0007669"/>
    <property type="project" value="TreeGrafter"/>
</dbReference>
<dbReference type="GO" id="GO:0005524">
    <property type="term" value="F:ATP binding"/>
    <property type="evidence" value="ECO:0007669"/>
    <property type="project" value="UniProtKB-UniRule"/>
</dbReference>
<dbReference type="GO" id="GO:0016887">
    <property type="term" value="F:ATP hydrolysis activity"/>
    <property type="evidence" value="ECO:0007669"/>
    <property type="project" value="InterPro"/>
</dbReference>
<dbReference type="GO" id="GO:0140664">
    <property type="term" value="F:ATP-dependent DNA damage sensor activity"/>
    <property type="evidence" value="ECO:0007669"/>
    <property type="project" value="InterPro"/>
</dbReference>
<dbReference type="GO" id="GO:0003684">
    <property type="term" value="F:damaged DNA binding"/>
    <property type="evidence" value="ECO:0007669"/>
    <property type="project" value="UniProtKB-UniRule"/>
</dbReference>
<dbReference type="GO" id="GO:0003697">
    <property type="term" value="F:single-stranded DNA binding"/>
    <property type="evidence" value="ECO:0007669"/>
    <property type="project" value="UniProtKB-UniRule"/>
</dbReference>
<dbReference type="GO" id="GO:0006310">
    <property type="term" value="P:DNA recombination"/>
    <property type="evidence" value="ECO:0007669"/>
    <property type="project" value="UniProtKB-UniRule"/>
</dbReference>
<dbReference type="GO" id="GO:0006281">
    <property type="term" value="P:DNA repair"/>
    <property type="evidence" value="ECO:0007669"/>
    <property type="project" value="UniProtKB-UniRule"/>
</dbReference>
<dbReference type="GO" id="GO:0009432">
    <property type="term" value="P:SOS response"/>
    <property type="evidence" value="ECO:0007669"/>
    <property type="project" value="UniProtKB-UniRule"/>
</dbReference>
<dbReference type="CDD" id="cd00983">
    <property type="entry name" value="RecA"/>
    <property type="match status" value="1"/>
</dbReference>
<dbReference type="FunFam" id="3.40.50.300:FF:000087">
    <property type="entry name" value="Recombinase RecA"/>
    <property type="match status" value="1"/>
</dbReference>
<dbReference type="Gene3D" id="3.40.50.300">
    <property type="entry name" value="P-loop containing nucleotide triphosphate hydrolases"/>
    <property type="match status" value="1"/>
</dbReference>
<dbReference type="HAMAP" id="MF_00268">
    <property type="entry name" value="RecA"/>
    <property type="match status" value="1"/>
</dbReference>
<dbReference type="InterPro" id="IPR003593">
    <property type="entry name" value="AAA+_ATPase"/>
</dbReference>
<dbReference type="InterPro" id="IPR013765">
    <property type="entry name" value="DNA_recomb/repair_RecA"/>
</dbReference>
<dbReference type="InterPro" id="IPR020584">
    <property type="entry name" value="DNA_recomb/repair_RecA_CS"/>
</dbReference>
<dbReference type="InterPro" id="IPR027417">
    <property type="entry name" value="P-loop_NTPase"/>
</dbReference>
<dbReference type="InterPro" id="IPR049261">
    <property type="entry name" value="RecA-like_C"/>
</dbReference>
<dbReference type="InterPro" id="IPR049428">
    <property type="entry name" value="RecA-like_N"/>
</dbReference>
<dbReference type="InterPro" id="IPR020588">
    <property type="entry name" value="RecA_ATP-bd"/>
</dbReference>
<dbReference type="InterPro" id="IPR023400">
    <property type="entry name" value="RecA_C_sf"/>
</dbReference>
<dbReference type="InterPro" id="IPR020587">
    <property type="entry name" value="RecA_monomer-monomer_interface"/>
</dbReference>
<dbReference type="NCBIfam" id="TIGR02012">
    <property type="entry name" value="tigrfam_recA"/>
    <property type="match status" value="1"/>
</dbReference>
<dbReference type="PANTHER" id="PTHR45900:SF1">
    <property type="entry name" value="MITOCHONDRIAL DNA REPAIR PROTEIN RECA HOMOLOG-RELATED"/>
    <property type="match status" value="1"/>
</dbReference>
<dbReference type="PANTHER" id="PTHR45900">
    <property type="entry name" value="RECA"/>
    <property type="match status" value="1"/>
</dbReference>
<dbReference type="Pfam" id="PF00154">
    <property type="entry name" value="RecA"/>
    <property type="match status" value="1"/>
</dbReference>
<dbReference type="Pfam" id="PF21096">
    <property type="entry name" value="RecA_C"/>
    <property type="match status" value="1"/>
</dbReference>
<dbReference type="PRINTS" id="PR00142">
    <property type="entry name" value="RECA"/>
</dbReference>
<dbReference type="SMART" id="SM00382">
    <property type="entry name" value="AAA"/>
    <property type="match status" value="1"/>
</dbReference>
<dbReference type="SUPFAM" id="SSF52540">
    <property type="entry name" value="P-loop containing nucleoside triphosphate hydrolases"/>
    <property type="match status" value="1"/>
</dbReference>
<dbReference type="SUPFAM" id="SSF54752">
    <property type="entry name" value="RecA protein, C-terminal domain"/>
    <property type="match status" value="1"/>
</dbReference>
<dbReference type="PROSITE" id="PS00321">
    <property type="entry name" value="RECA_1"/>
    <property type="match status" value="1"/>
</dbReference>
<dbReference type="PROSITE" id="PS50162">
    <property type="entry name" value="RECA_2"/>
    <property type="match status" value="1"/>
</dbReference>
<dbReference type="PROSITE" id="PS50163">
    <property type="entry name" value="RECA_3"/>
    <property type="match status" value="1"/>
</dbReference>
<keyword id="KW-0067">ATP-binding</keyword>
<keyword id="KW-0963">Cytoplasm</keyword>
<keyword id="KW-0227">DNA damage</keyword>
<keyword id="KW-0233">DNA recombination</keyword>
<keyword id="KW-0234">DNA repair</keyword>
<keyword id="KW-0238">DNA-binding</keyword>
<keyword id="KW-0547">Nucleotide-binding</keyword>
<keyword id="KW-0742">SOS response</keyword>
<organism>
    <name type="scientific">Streptococcus pyogenes serotype M28 (strain MGAS6180)</name>
    <dbReference type="NCBI Taxonomy" id="319701"/>
    <lineage>
        <taxon>Bacteria</taxon>
        <taxon>Bacillati</taxon>
        <taxon>Bacillota</taxon>
        <taxon>Bacilli</taxon>
        <taxon>Lactobacillales</taxon>
        <taxon>Streptococcaceae</taxon>
        <taxon>Streptococcus</taxon>
    </lineage>
</organism>
<gene>
    <name evidence="1" type="primary">recA</name>
    <name type="ordered locus">M28_Spy1783</name>
</gene>
<sequence>MAKKLKKNEEITKKFGDERRKALDDALKNIEKDFGKGAVMRLGERAEQKVQVMSSGSLALDIALGAGGYPKGRIIEIYGPESSGKTTVALHAVAQAQKEGGIAAFIDAEHALDPAYAAALGVNIDELLLSQPDSGEQGLEIAGKLIDSGAVDLVVVDSVAALVPRAEIDGDIGDSHVGLQARMMSQAMRKLSASINKTKTIAIFINQLREKVGVMFGNPETTPGGRALKFYASVRLDVRGTTQIKGTGDQKDSSIGKETKIKVVKNKVAPPFKVAEVEIMYGEGISRTGELVKIASDLDIIQKAGAWFSYNGEKIGQGSENAKRYLADHPELFDEIDRKVRVKFGLLEESEEESAMVVASEEIDDLALDLDNGIEIED</sequence>
<protein>
    <recommendedName>
        <fullName evidence="1">Protein RecA</fullName>
    </recommendedName>
    <alternativeName>
        <fullName evidence="1">Recombinase A</fullName>
    </alternativeName>
</protein>
<feature type="chain" id="PRO_1000048016" description="Protein RecA">
    <location>
        <begin position="1"/>
        <end position="378"/>
    </location>
</feature>
<feature type="binding site" evidence="1">
    <location>
        <begin position="79"/>
        <end position="86"/>
    </location>
    <ligand>
        <name>ATP</name>
        <dbReference type="ChEBI" id="CHEBI:30616"/>
    </ligand>
</feature>
<evidence type="ECO:0000255" key="1">
    <source>
        <dbReference type="HAMAP-Rule" id="MF_00268"/>
    </source>
</evidence>
<reference key="1">
    <citation type="journal article" date="2005" name="J. Infect. Dis.">
        <title>Genome sequence of a serotype M28 strain of group A Streptococcus: potential new insights into puerperal sepsis and bacterial disease specificity.</title>
        <authorList>
            <person name="Green N.M."/>
            <person name="Zhang S."/>
            <person name="Porcella S.F."/>
            <person name="Nagiec M.J."/>
            <person name="Barbian K.D."/>
            <person name="Beres S.B."/>
            <person name="Lefebvre R.B."/>
            <person name="Musser J.M."/>
        </authorList>
    </citation>
    <scope>NUCLEOTIDE SEQUENCE [LARGE SCALE GENOMIC DNA]</scope>
    <source>
        <strain>MGAS6180</strain>
    </source>
</reference>
<proteinExistence type="inferred from homology"/>
<name>RECA_STRPM</name>
<comment type="function">
    <text evidence="1">Can catalyze the hydrolysis of ATP in the presence of single-stranded DNA, the ATP-dependent uptake of single-stranded DNA by duplex DNA, and the ATP-dependent hybridization of homologous single-stranded DNAs. It interacts with LexA causing its activation and leading to its autocatalytic cleavage.</text>
</comment>
<comment type="subcellular location">
    <subcellularLocation>
        <location evidence="1">Cytoplasm</location>
    </subcellularLocation>
</comment>
<comment type="similarity">
    <text evidence="1">Belongs to the RecA family.</text>
</comment>
<accession>Q48QW7</accession>